<gene>
    <name type="primary">nkain1</name>
    <name type="ORF">zgc:65908</name>
</gene>
<name>NKAI1_DANRE</name>
<comment type="subunit">
    <text evidence="1">Interacts with atp1b1 C-terminus.</text>
</comment>
<comment type="subcellular location">
    <subcellularLocation>
        <location evidence="3">Cell membrane</location>
        <topology evidence="3">Multi-pass membrane protein</topology>
    </subcellularLocation>
</comment>
<comment type="similarity">
    <text evidence="3">Belongs to the NKAIN family.</text>
</comment>
<sequence>MGRCDGRCTLVVICCLQLVAALQRQVFDFMGYQWAPILANFLHIMAVILGVFGTVQVRSRYLILYAVWLVVWVGWNSFIICFYLEVGHLSQDRDFLMTFNTSLHRSWWMENGPGCLVTPVPDSPLAPQDHHVITVSGCLLDYQYIEVVSSALQVFLALFGFVYACYVSKYSPDDEDSFDFFDGLGSYNYQPPQKISQLQLRPLYTTG</sequence>
<organism>
    <name type="scientific">Danio rerio</name>
    <name type="common">Zebrafish</name>
    <name type="synonym">Brachydanio rerio</name>
    <dbReference type="NCBI Taxonomy" id="7955"/>
    <lineage>
        <taxon>Eukaryota</taxon>
        <taxon>Metazoa</taxon>
        <taxon>Chordata</taxon>
        <taxon>Craniata</taxon>
        <taxon>Vertebrata</taxon>
        <taxon>Euteleostomi</taxon>
        <taxon>Actinopterygii</taxon>
        <taxon>Neopterygii</taxon>
        <taxon>Teleostei</taxon>
        <taxon>Ostariophysi</taxon>
        <taxon>Cypriniformes</taxon>
        <taxon>Danionidae</taxon>
        <taxon>Danioninae</taxon>
        <taxon>Danio</taxon>
    </lineage>
</organism>
<reference key="1">
    <citation type="submission" date="2003-08" db="EMBL/GenBank/DDBJ databases">
        <authorList>
            <consortium name="NIH - Zebrafish Gene Collection (ZGC) project"/>
        </authorList>
    </citation>
    <scope>NUCLEOTIDE SEQUENCE [LARGE SCALE MRNA]</scope>
    <source>
        <tissue>Embryo</tissue>
    </source>
</reference>
<protein>
    <recommendedName>
        <fullName>Sodium/potassium-transporting ATPase subunit beta-1-interacting protein 1</fullName>
        <shortName>Na(+)/K(+)-transporting ATPase subunit beta-1-interacting protein 1</shortName>
    </recommendedName>
</protein>
<proteinExistence type="evidence at transcript level"/>
<feature type="chain" id="PRO_0000310467" description="Sodium/potassium-transporting ATPase subunit beta-1-interacting protein 1">
    <location>
        <begin position="1"/>
        <end position="207"/>
    </location>
</feature>
<feature type="transmembrane region" description="Helical" evidence="2">
    <location>
        <begin position="2"/>
        <end position="22"/>
    </location>
</feature>
<feature type="transmembrane region" description="Helical" evidence="2">
    <location>
        <begin position="35"/>
        <end position="55"/>
    </location>
</feature>
<feature type="transmembrane region" description="Helical" evidence="2">
    <location>
        <begin position="62"/>
        <end position="82"/>
    </location>
</feature>
<feature type="transmembrane region" description="Helical" evidence="2">
    <location>
        <begin position="147"/>
        <end position="167"/>
    </location>
</feature>
<feature type="glycosylation site" description="N-linked (GlcNAc...) asparagine" evidence="2">
    <location>
        <position position="100"/>
    </location>
</feature>
<keyword id="KW-1003">Cell membrane</keyword>
<keyword id="KW-0325">Glycoprotein</keyword>
<keyword id="KW-0472">Membrane</keyword>
<keyword id="KW-1185">Reference proteome</keyword>
<keyword id="KW-0812">Transmembrane</keyword>
<keyword id="KW-1133">Transmembrane helix</keyword>
<evidence type="ECO:0000250" key="1"/>
<evidence type="ECO:0000255" key="2"/>
<evidence type="ECO:0000305" key="3"/>
<accession>Q6PHL4</accession>
<dbReference type="EMBL" id="BC056509">
    <property type="protein sequence ID" value="AAH56509.1"/>
    <property type="molecule type" value="mRNA"/>
</dbReference>
<dbReference type="RefSeq" id="NP_956839.1">
    <property type="nucleotide sequence ID" value="NM_200545.1"/>
</dbReference>
<dbReference type="SMR" id="Q6PHL4"/>
<dbReference type="FunCoup" id="Q6PHL4">
    <property type="interactions" value="250"/>
</dbReference>
<dbReference type="STRING" id="7955.ENSDARP00000003013"/>
<dbReference type="GlyCosmos" id="Q6PHL4">
    <property type="glycosylation" value="1 site, No reported glycans"/>
</dbReference>
<dbReference type="PaxDb" id="7955-ENSDARP00000003013"/>
<dbReference type="Ensembl" id="ENSDART00000015632">
    <property type="protein sequence ID" value="ENSDARP00000003013"/>
    <property type="gene ID" value="ENSDARG00000006859"/>
</dbReference>
<dbReference type="Ensembl" id="ENSDART00000182608">
    <property type="protein sequence ID" value="ENSDARP00000148785"/>
    <property type="gene ID" value="ENSDARG00000006859"/>
</dbReference>
<dbReference type="GeneID" id="393517"/>
<dbReference type="KEGG" id="dre:393517"/>
<dbReference type="AGR" id="ZFIN:ZDB-GENE-040426-1472"/>
<dbReference type="CTD" id="79570"/>
<dbReference type="ZFIN" id="ZDB-GENE-040426-1472">
    <property type="gene designation" value="nkain1"/>
</dbReference>
<dbReference type="eggNOG" id="KOG4556">
    <property type="taxonomic scope" value="Eukaryota"/>
</dbReference>
<dbReference type="HOGENOM" id="CLU_090781_0_0_1"/>
<dbReference type="InParanoid" id="Q6PHL4"/>
<dbReference type="OMA" id="DSHMAPD"/>
<dbReference type="OrthoDB" id="10050321at2759"/>
<dbReference type="PhylomeDB" id="Q6PHL4"/>
<dbReference type="TreeFam" id="TF321348"/>
<dbReference type="PRO" id="PR:Q6PHL4"/>
<dbReference type="Proteomes" id="UP000000437">
    <property type="component" value="Chromosome 19"/>
</dbReference>
<dbReference type="Bgee" id="ENSDARG00000006859">
    <property type="expression patterns" value="Expressed in mature ovarian follicle and 28 other cell types or tissues"/>
</dbReference>
<dbReference type="ExpressionAtlas" id="Q6PHL4">
    <property type="expression patterns" value="baseline and differential"/>
</dbReference>
<dbReference type="GO" id="GO:0005886">
    <property type="term" value="C:plasma membrane"/>
    <property type="evidence" value="ECO:0007669"/>
    <property type="project" value="UniProtKB-SubCell"/>
</dbReference>
<dbReference type="GO" id="GO:0002028">
    <property type="term" value="P:regulation of sodium ion transport"/>
    <property type="evidence" value="ECO:0000318"/>
    <property type="project" value="GO_Central"/>
</dbReference>
<dbReference type="InterPro" id="IPR008516">
    <property type="entry name" value="Na/K-Atpase_Interacting"/>
</dbReference>
<dbReference type="PANTHER" id="PTHR13084:SF4">
    <property type="entry name" value="SODIUM_POTASSIUM-TRANSPORTING ATPASE SUBUNIT BETA-1-INTERACTING PROTEIN 1"/>
    <property type="match status" value="1"/>
</dbReference>
<dbReference type="PANTHER" id="PTHR13084">
    <property type="entry name" value="T-CELL LYMPHOMA BREAKPOINT-ASSOCIATED TARGET 1-RELATED"/>
    <property type="match status" value="1"/>
</dbReference>
<dbReference type="Pfam" id="PF05640">
    <property type="entry name" value="NKAIN"/>
    <property type="match status" value="1"/>
</dbReference>